<comment type="function">
    <text evidence="1">Catalyzes the reversible isomerization-deamination of glucosamine 6-phosphate (GlcN6P) to form fructose 6-phosphate (Fru6P) and ammonium ion.</text>
</comment>
<comment type="catalytic activity">
    <reaction evidence="1">
        <text>alpha-D-glucosamine 6-phosphate + H2O = beta-D-fructose 6-phosphate + NH4(+)</text>
        <dbReference type="Rhea" id="RHEA:12172"/>
        <dbReference type="ChEBI" id="CHEBI:15377"/>
        <dbReference type="ChEBI" id="CHEBI:28938"/>
        <dbReference type="ChEBI" id="CHEBI:57634"/>
        <dbReference type="ChEBI" id="CHEBI:75989"/>
        <dbReference type="EC" id="3.5.99.6"/>
    </reaction>
</comment>
<comment type="activity regulation">
    <text evidence="1">Allosterically activated by N-acetylglucosamine 6-phosphate (GlcNAc6P).</text>
</comment>
<comment type="pathway">
    <text evidence="1">Amino-sugar metabolism; N-acetylneuraminate degradation; D-fructose 6-phosphate from N-acetylneuraminate: step 5/5.</text>
</comment>
<comment type="subunit">
    <text evidence="1">Homohexamer; trimer of disulfide-linked dimers.</text>
</comment>
<comment type="similarity">
    <text evidence="1">Belongs to the glucosamine/galactosamine-6-phosphate isomerase family. NagB subfamily.</text>
</comment>
<proteinExistence type="inferred from homology"/>
<organism>
    <name type="scientific">Escherichia coli (strain SE11)</name>
    <dbReference type="NCBI Taxonomy" id="409438"/>
    <lineage>
        <taxon>Bacteria</taxon>
        <taxon>Pseudomonadati</taxon>
        <taxon>Pseudomonadota</taxon>
        <taxon>Gammaproteobacteria</taxon>
        <taxon>Enterobacterales</taxon>
        <taxon>Enterobacteriaceae</taxon>
        <taxon>Escherichia</taxon>
    </lineage>
</organism>
<reference key="1">
    <citation type="journal article" date="2008" name="DNA Res.">
        <title>Complete genome sequence and comparative analysis of the wild-type commensal Escherichia coli strain SE11 isolated from a healthy adult.</title>
        <authorList>
            <person name="Oshima K."/>
            <person name="Toh H."/>
            <person name="Ogura Y."/>
            <person name="Sasamoto H."/>
            <person name="Morita H."/>
            <person name="Park S.-H."/>
            <person name="Ooka T."/>
            <person name="Iyoda S."/>
            <person name="Taylor T.D."/>
            <person name="Hayashi T."/>
            <person name="Itoh K."/>
            <person name="Hattori M."/>
        </authorList>
    </citation>
    <scope>NUCLEOTIDE SEQUENCE [LARGE SCALE GENOMIC DNA]</scope>
    <source>
        <strain>SE11</strain>
    </source>
</reference>
<protein>
    <recommendedName>
        <fullName evidence="1">Glucosamine-6-phosphate deaminase</fullName>
        <ecNumber evidence="1">3.5.99.6</ecNumber>
    </recommendedName>
    <alternativeName>
        <fullName evidence="1">GlcN6P deaminase</fullName>
        <shortName evidence="1">GNPDA</shortName>
    </alternativeName>
    <alternativeName>
        <fullName evidence="1">Glucosamine-6-phosphate isomerase</fullName>
    </alternativeName>
</protein>
<sequence length="266" mass="29774">MRLIPLTTAEQVGKWAARHIVNRINAFKPTADRPFVLGLPTGGTPMTTYKALVEMHKAGQVSFKHVVTFNMDEYVGLPKEHPESYYSFMHRNFFDHVDIPAENINLLNGNAPDIDAECRQYEEKIRSYGKIHLFMGGVGNDGHIAFNEPASSLASRTRIKTLTHDTRVANSRFFDNDVNQVPKYALTVGVGTLLDAEEVMILVLGSQKALALQAAVEGCVNHMWTISCLQLHPKAIMVCDEPSTMELKVKTLRYFNELEAENIKGL</sequence>
<evidence type="ECO:0000255" key="1">
    <source>
        <dbReference type="HAMAP-Rule" id="MF_01241"/>
    </source>
</evidence>
<accession>B6HYN6</accession>
<feature type="chain" id="PRO_1000139774" description="Glucosamine-6-phosphate deaminase">
    <location>
        <begin position="1"/>
        <end position="266"/>
    </location>
</feature>
<feature type="active site" description="Proton acceptor; for enolization step" evidence="1">
    <location>
        <position position="72"/>
    </location>
</feature>
<feature type="active site" description="For ring-opening step" evidence="1">
    <location>
        <position position="141"/>
    </location>
</feature>
<feature type="active site" description="Proton acceptor; for ring-opening step" evidence="1">
    <location>
        <position position="143"/>
    </location>
</feature>
<feature type="active site" description="For ring-opening step" evidence="1">
    <location>
        <position position="148"/>
    </location>
</feature>
<feature type="site" description="Part of the allosteric site" evidence="1">
    <location>
        <position position="151"/>
    </location>
</feature>
<feature type="site" description="Part of the allosteric site" evidence="1">
    <location>
        <position position="158"/>
    </location>
</feature>
<feature type="site" description="Part of the allosteric site" evidence="1">
    <location>
        <position position="160"/>
    </location>
</feature>
<feature type="site" description="Part of the allosteric site" evidence="1">
    <location>
        <position position="161"/>
    </location>
</feature>
<feature type="site" description="Part of the allosteric site" evidence="1">
    <location>
        <position position="254"/>
    </location>
</feature>
<feature type="disulfide bond" description="Interchain" evidence="1">
    <location>
        <position position="219"/>
    </location>
</feature>
<keyword id="KW-0021">Allosteric enzyme</keyword>
<keyword id="KW-0119">Carbohydrate metabolism</keyword>
<keyword id="KW-1015">Disulfide bond</keyword>
<keyword id="KW-0378">Hydrolase</keyword>
<dbReference type="EC" id="3.5.99.6" evidence="1"/>
<dbReference type="EMBL" id="AP009240">
    <property type="protein sequence ID" value="BAG76262.1"/>
    <property type="molecule type" value="Genomic_DNA"/>
</dbReference>
<dbReference type="RefSeq" id="WP_001237072.1">
    <property type="nucleotide sequence ID" value="NC_011415.1"/>
</dbReference>
<dbReference type="SMR" id="B6HYN6"/>
<dbReference type="GeneID" id="93776807"/>
<dbReference type="KEGG" id="ecy:ECSE_0738"/>
<dbReference type="HOGENOM" id="CLU_049611_0_1_6"/>
<dbReference type="UniPathway" id="UPA00629">
    <property type="reaction ID" value="UER00684"/>
</dbReference>
<dbReference type="Proteomes" id="UP000008199">
    <property type="component" value="Chromosome"/>
</dbReference>
<dbReference type="GO" id="GO:0005829">
    <property type="term" value="C:cytosol"/>
    <property type="evidence" value="ECO:0007669"/>
    <property type="project" value="TreeGrafter"/>
</dbReference>
<dbReference type="GO" id="GO:0004342">
    <property type="term" value="F:glucosamine-6-phosphate deaminase activity"/>
    <property type="evidence" value="ECO:0007669"/>
    <property type="project" value="UniProtKB-UniRule"/>
</dbReference>
<dbReference type="GO" id="GO:0042802">
    <property type="term" value="F:identical protein binding"/>
    <property type="evidence" value="ECO:0007669"/>
    <property type="project" value="TreeGrafter"/>
</dbReference>
<dbReference type="GO" id="GO:0005975">
    <property type="term" value="P:carbohydrate metabolic process"/>
    <property type="evidence" value="ECO:0007669"/>
    <property type="project" value="InterPro"/>
</dbReference>
<dbReference type="GO" id="GO:0006043">
    <property type="term" value="P:glucosamine catabolic process"/>
    <property type="evidence" value="ECO:0007669"/>
    <property type="project" value="TreeGrafter"/>
</dbReference>
<dbReference type="GO" id="GO:0006046">
    <property type="term" value="P:N-acetylglucosamine catabolic process"/>
    <property type="evidence" value="ECO:0007669"/>
    <property type="project" value="TreeGrafter"/>
</dbReference>
<dbReference type="GO" id="GO:0019262">
    <property type="term" value="P:N-acetylneuraminate catabolic process"/>
    <property type="evidence" value="ECO:0007669"/>
    <property type="project" value="UniProtKB-UniRule"/>
</dbReference>
<dbReference type="CDD" id="cd01399">
    <property type="entry name" value="GlcN6P_deaminase"/>
    <property type="match status" value="1"/>
</dbReference>
<dbReference type="FunFam" id="3.40.50.1360:FF:000002">
    <property type="entry name" value="Glucosamine-6-phosphate deaminase"/>
    <property type="match status" value="1"/>
</dbReference>
<dbReference type="Gene3D" id="3.40.50.1360">
    <property type="match status" value="1"/>
</dbReference>
<dbReference type="HAMAP" id="MF_01241">
    <property type="entry name" value="GlcN6P_deamin"/>
    <property type="match status" value="1"/>
</dbReference>
<dbReference type="InterPro" id="IPR006148">
    <property type="entry name" value="Glc/Gal-6P_isomerase"/>
</dbReference>
<dbReference type="InterPro" id="IPR004547">
    <property type="entry name" value="Glucosamine6P_isomerase"/>
</dbReference>
<dbReference type="InterPro" id="IPR018321">
    <property type="entry name" value="Glucosamine6P_isomerase_CS"/>
</dbReference>
<dbReference type="InterPro" id="IPR037171">
    <property type="entry name" value="NagB/RpiA_transferase-like"/>
</dbReference>
<dbReference type="NCBIfam" id="TIGR00502">
    <property type="entry name" value="nagB"/>
    <property type="match status" value="1"/>
</dbReference>
<dbReference type="NCBIfam" id="NF001685">
    <property type="entry name" value="PRK00443.1-5"/>
    <property type="match status" value="1"/>
</dbReference>
<dbReference type="PANTHER" id="PTHR11280">
    <property type="entry name" value="GLUCOSAMINE-6-PHOSPHATE ISOMERASE"/>
    <property type="match status" value="1"/>
</dbReference>
<dbReference type="PANTHER" id="PTHR11280:SF5">
    <property type="entry name" value="GLUCOSAMINE-6-PHOSPHATE ISOMERASE"/>
    <property type="match status" value="1"/>
</dbReference>
<dbReference type="Pfam" id="PF01182">
    <property type="entry name" value="Glucosamine_iso"/>
    <property type="match status" value="1"/>
</dbReference>
<dbReference type="SUPFAM" id="SSF100950">
    <property type="entry name" value="NagB/RpiA/CoA transferase-like"/>
    <property type="match status" value="1"/>
</dbReference>
<dbReference type="PROSITE" id="PS01161">
    <property type="entry name" value="GLC_GALNAC_ISOMERASE"/>
    <property type="match status" value="1"/>
</dbReference>
<name>NAGB_ECOSE</name>
<gene>
    <name evidence="1" type="primary">nagB</name>
    <name type="ordered locus">ECSE_0738</name>
</gene>